<organism>
    <name type="scientific">Saimiriine herpesvirus 2 (strain 11)</name>
    <name type="common">SaHV-2</name>
    <name type="synonym">Herpesvirus saimiri</name>
    <dbReference type="NCBI Taxonomy" id="10383"/>
    <lineage>
        <taxon>Viruses</taxon>
        <taxon>Duplodnaviria</taxon>
        <taxon>Heunggongvirae</taxon>
        <taxon>Peploviricota</taxon>
        <taxon>Herviviricetes</taxon>
        <taxon>Herpesvirales</taxon>
        <taxon>Orthoherpesviridae</taxon>
        <taxon>Gammaherpesvirinae</taxon>
        <taxon>Rhadinovirus</taxon>
        <taxon>Rhadinovirus saimiriinegamma2</taxon>
        <taxon>Saimiriine herpesvirus 2</taxon>
    </lineage>
</organism>
<dbReference type="EMBL" id="X64346">
    <property type="protein sequence ID" value="CAA45656.1"/>
    <property type="molecule type" value="Genomic_DNA"/>
</dbReference>
<dbReference type="RefSeq" id="NP_040236.1">
    <property type="nucleotide sequence ID" value="NC_001350.1"/>
</dbReference>
<dbReference type="KEGG" id="vg:1682471"/>
<dbReference type="Proteomes" id="UP000000587">
    <property type="component" value="Segment"/>
</dbReference>
<dbReference type="InterPro" id="IPR004280">
    <property type="entry name" value="Herpes_UL95"/>
</dbReference>
<dbReference type="Pfam" id="PF03038">
    <property type="entry name" value="Herpes_UL95"/>
    <property type="match status" value="1"/>
</dbReference>
<comment type="similarity">
    <text evidence="1">Belongs to the herpesviridae UL95 family.</text>
</comment>
<protein>
    <recommendedName>
        <fullName>Gene 34 protein</fullName>
    </recommendedName>
</protein>
<accession>Q01023</accession>
<sequence>MFNLVELAVKGNPELKKRYSQGLDLAIAMSENIPDQFKLIETPTNSFLLISNVMPEDSRPWHTQIQKCLDFSNLHLPKLNKLNKICTGYDHREDTVKKLEAVPPYLVYDSEEWKLALQINKDSLIYSAIEMLADPKNWQGLYPIDPLPYIWLLFYGKKSFCASSDCIYFKKYNVPGPMLLPPHMYRPDKNISSFISHVCQYVKNLYEEVSEPINLEIVPFDNCRIKEAVEELKQIDLPVAYLSNLCLLCTLHRQNMSASRGSGDMCGYIVLGGEGEKYITTNIISKRCTVSGDCLIVPSYNISLLMQNMEINYEQQ</sequence>
<keyword id="KW-1185">Reference proteome</keyword>
<proteinExistence type="inferred from homology"/>
<gene>
    <name type="primary">34</name>
</gene>
<reference key="1">
    <citation type="journal article" date="1992" name="J. Virol.">
        <title>Primary structure of the herpesvirus saimiri genome.</title>
        <authorList>
            <person name="Albrecht J.-C."/>
            <person name="Nicholas J."/>
            <person name="Biller D."/>
            <person name="Cameron K.R."/>
            <person name="Biesinger B."/>
            <person name="Newman C."/>
            <person name="Wittmann S."/>
            <person name="Craxton M.A."/>
            <person name="Coleman H."/>
            <person name="Fleckenstein B."/>
            <person name="Honess R.W."/>
        </authorList>
    </citation>
    <scope>NUCLEOTIDE SEQUENCE [LARGE SCALE GENOMIC DNA]</scope>
</reference>
<name>UL95_SHV21</name>
<organismHost>
    <name type="scientific">Saimiri sciureus</name>
    <name type="common">Common squirrel monkey</name>
    <dbReference type="NCBI Taxonomy" id="9521"/>
</organismHost>
<evidence type="ECO:0000305" key="1"/>
<feature type="chain" id="PRO_0000116247" description="Gene 34 protein">
    <location>
        <begin position="1"/>
        <end position="316"/>
    </location>
</feature>